<protein>
    <recommendedName>
        <fullName evidence="1">Urease subunit beta</fullName>
        <ecNumber evidence="1">3.5.1.5</ecNumber>
    </recommendedName>
    <alternativeName>
        <fullName evidence="1">Urea amidohydrolase subunit beta</fullName>
    </alternativeName>
</protein>
<keyword id="KW-0963">Cytoplasm</keyword>
<keyword id="KW-0378">Hydrolase</keyword>
<organism>
    <name type="scientific">Mesorhizobium japonicum (strain LMG 29417 / CECT 9101 / MAFF 303099)</name>
    <name type="common">Mesorhizobium loti (strain MAFF 303099)</name>
    <dbReference type="NCBI Taxonomy" id="266835"/>
    <lineage>
        <taxon>Bacteria</taxon>
        <taxon>Pseudomonadati</taxon>
        <taxon>Pseudomonadota</taxon>
        <taxon>Alphaproteobacteria</taxon>
        <taxon>Hyphomicrobiales</taxon>
        <taxon>Phyllobacteriaceae</taxon>
        <taxon>Mesorhizobium</taxon>
    </lineage>
</organism>
<proteinExistence type="inferred from homology"/>
<reference key="1">
    <citation type="journal article" date="2000" name="DNA Res.">
        <title>Complete genome structure of the nitrogen-fixing symbiotic bacterium Mesorhizobium loti.</title>
        <authorList>
            <person name="Kaneko T."/>
            <person name="Nakamura Y."/>
            <person name="Sato S."/>
            <person name="Asamizu E."/>
            <person name="Kato T."/>
            <person name="Sasamoto S."/>
            <person name="Watanabe A."/>
            <person name="Idesawa K."/>
            <person name="Ishikawa A."/>
            <person name="Kawashima K."/>
            <person name="Kimura T."/>
            <person name="Kishida Y."/>
            <person name="Kiyokawa C."/>
            <person name="Kohara M."/>
            <person name="Matsumoto M."/>
            <person name="Matsuno A."/>
            <person name="Mochizuki Y."/>
            <person name="Nakayama S."/>
            <person name="Nakazaki N."/>
            <person name="Shimpo S."/>
            <person name="Sugimoto M."/>
            <person name="Takeuchi C."/>
            <person name="Yamada M."/>
            <person name="Tabata S."/>
        </authorList>
    </citation>
    <scope>NUCLEOTIDE SEQUENCE [LARGE SCALE GENOMIC DNA]</scope>
    <source>
        <strain>LMG 29417 / CECT 9101 / MAFF 303099</strain>
    </source>
</reference>
<dbReference type="EC" id="3.5.1.5" evidence="1"/>
<dbReference type="EMBL" id="BA000012">
    <property type="protein sequence ID" value="BAB51485.1"/>
    <property type="molecule type" value="Genomic_DNA"/>
</dbReference>
<dbReference type="RefSeq" id="WP_010912826.1">
    <property type="nucleotide sequence ID" value="NC_002678.2"/>
</dbReference>
<dbReference type="SMR" id="Q98CY6"/>
<dbReference type="KEGG" id="mlo:msl4944"/>
<dbReference type="eggNOG" id="COG0832">
    <property type="taxonomic scope" value="Bacteria"/>
</dbReference>
<dbReference type="HOGENOM" id="CLU_129707_1_1_5"/>
<dbReference type="UniPathway" id="UPA00258">
    <property type="reaction ID" value="UER00370"/>
</dbReference>
<dbReference type="Proteomes" id="UP000000552">
    <property type="component" value="Chromosome"/>
</dbReference>
<dbReference type="GO" id="GO:0035550">
    <property type="term" value="C:urease complex"/>
    <property type="evidence" value="ECO:0007669"/>
    <property type="project" value="InterPro"/>
</dbReference>
<dbReference type="GO" id="GO:0009039">
    <property type="term" value="F:urease activity"/>
    <property type="evidence" value="ECO:0007669"/>
    <property type="project" value="UniProtKB-UniRule"/>
</dbReference>
<dbReference type="GO" id="GO:0043419">
    <property type="term" value="P:urea catabolic process"/>
    <property type="evidence" value="ECO:0007669"/>
    <property type="project" value="UniProtKB-UniRule"/>
</dbReference>
<dbReference type="CDD" id="cd00407">
    <property type="entry name" value="Urease_beta"/>
    <property type="match status" value="1"/>
</dbReference>
<dbReference type="FunFam" id="2.10.150.10:FF:000001">
    <property type="entry name" value="Urease subunit beta"/>
    <property type="match status" value="1"/>
</dbReference>
<dbReference type="Gene3D" id="2.10.150.10">
    <property type="entry name" value="Urease, beta subunit"/>
    <property type="match status" value="1"/>
</dbReference>
<dbReference type="HAMAP" id="MF_01954">
    <property type="entry name" value="Urease_beta"/>
    <property type="match status" value="1"/>
</dbReference>
<dbReference type="InterPro" id="IPR002019">
    <property type="entry name" value="Urease_beta-like"/>
</dbReference>
<dbReference type="InterPro" id="IPR036461">
    <property type="entry name" value="Urease_betasu_sf"/>
</dbReference>
<dbReference type="InterPro" id="IPR050069">
    <property type="entry name" value="Urease_subunit"/>
</dbReference>
<dbReference type="NCBIfam" id="NF009682">
    <property type="entry name" value="PRK13203.1"/>
    <property type="match status" value="1"/>
</dbReference>
<dbReference type="NCBIfam" id="TIGR00192">
    <property type="entry name" value="urease_beta"/>
    <property type="match status" value="1"/>
</dbReference>
<dbReference type="PANTHER" id="PTHR33569">
    <property type="entry name" value="UREASE"/>
    <property type="match status" value="1"/>
</dbReference>
<dbReference type="PANTHER" id="PTHR33569:SF1">
    <property type="entry name" value="UREASE"/>
    <property type="match status" value="1"/>
</dbReference>
<dbReference type="Pfam" id="PF00699">
    <property type="entry name" value="Urease_beta"/>
    <property type="match status" value="1"/>
</dbReference>
<dbReference type="SUPFAM" id="SSF51278">
    <property type="entry name" value="Urease, beta-subunit"/>
    <property type="match status" value="1"/>
</dbReference>
<gene>
    <name evidence="1" type="primary">ureB</name>
    <name type="ordered locus">msl4944</name>
</gene>
<evidence type="ECO:0000255" key="1">
    <source>
        <dbReference type="HAMAP-Rule" id="MF_01954"/>
    </source>
</evidence>
<comment type="catalytic activity">
    <reaction evidence="1">
        <text>urea + 2 H2O + H(+) = hydrogencarbonate + 2 NH4(+)</text>
        <dbReference type="Rhea" id="RHEA:20557"/>
        <dbReference type="ChEBI" id="CHEBI:15377"/>
        <dbReference type="ChEBI" id="CHEBI:15378"/>
        <dbReference type="ChEBI" id="CHEBI:16199"/>
        <dbReference type="ChEBI" id="CHEBI:17544"/>
        <dbReference type="ChEBI" id="CHEBI:28938"/>
        <dbReference type="EC" id="3.5.1.5"/>
    </reaction>
</comment>
<comment type="pathway">
    <text evidence="1">Nitrogen metabolism; urea degradation; CO(2) and NH(3) from urea (urease route): step 1/1.</text>
</comment>
<comment type="subunit">
    <text evidence="1">Heterotrimer of UreA (gamma), UreB (beta) and UreC (alpha) subunits. Three heterotrimers associate to form the active enzyme.</text>
</comment>
<comment type="subcellular location">
    <subcellularLocation>
        <location evidence="1">Cytoplasm</location>
    </subcellularLocation>
</comment>
<comment type="similarity">
    <text evidence="1">Belongs to the urease beta subunit family.</text>
</comment>
<accession>Q98CY6</accession>
<name>URE2_RHILO</name>
<sequence>MIPGEIIPVQGDIELNKGLPTVTLKVANSGDRPIQVGSHYHFFETNEGLKFDREQTRGMRLDIAAGTAMRFEPGQERDVTLVPLGGKREVYGFQQKVMGKL</sequence>
<feature type="chain" id="PRO_0000234269" description="Urease subunit beta">
    <location>
        <begin position="1"/>
        <end position="101"/>
    </location>
</feature>